<sequence length="508" mass="57235">MEILNNKTLPELAWLLLGPLVLFYVFKLFIYNVYFHPLRKFPGPWINKISIIPHLYTVFQGKQSYELLKLHRKYGHIVRYGPNELSFSSARAWKDIYGSRPGHQTFVKGTWYDGLSIFAAQDVRSIITERDPTKHAAIARVFGGAFSRSFLNEMEPMINDYIDRFIEHVKTKTANGGVVDLTFGYSSMTFDIIGDLAFGQDFGAIGRETTHPFILELNESLTFTSFHEAIQQFPALGPIARFFFREKVNKLEETARKGGEFALQVMRKRVAEQDTTSRKDFLTKVLEQRASSKVQMSEIQLAAQSWDFIGAGTETTASVMTSTTYYLLRDKKLLAELTAEIRAAFPNADAITNASTEKLELLHRVCLEGLRLPTGAPPILPRLVPKGGDTVDGHFIPGGTPVTIAPMVAALDPLNFKDPLEFKPERWLGKSGDILEASQPFSYGTRGCAGKAIALMEVRVTIAKMLYTFDMELENPDLDWTGNDFNNLLQFGLWVRPLLNVRARLATK</sequence>
<name>BIPB_COCSN</name>
<reference key="1">
    <citation type="journal article" date="2012" name="PLoS Pathog.">
        <title>Diverse lifestyles and strategies of plant pathogenesis encoded in the genomes of eighteen Dothideomycetes fungi.</title>
        <authorList>
            <person name="Ohm R.A."/>
            <person name="Feau N."/>
            <person name="Henrissat B."/>
            <person name="Schoch C.L."/>
            <person name="Horwitz B.A."/>
            <person name="Barry K.W."/>
            <person name="Condon B.J."/>
            <person name="Copeland A.C."/>
            <person name="Dhillon B."/>
            <person name="Glaser F."/>
            <person name="Hesse C.N."/>
            <person name="Kosti I."/>
            <person name="LaButti K."/>
            <person name="Lindquist E.A."/>
            <person name="Lucas S."/>
            <person name="Salamov A.A."/>
            <person name="Bradshaw R.E."/>
            <person name="Ciuffetti L."/>
            <person name="Hamelin R.C."/>
            <person name="Kema G.H.J."/>
            <person name="Lawrence C."/>
            <person name="Scott J.A."/>
            <person name="Spatafora J.W."/>
            <person name="Turgeon B.G."/>
            <person name="de Wit P.J.G.M."/>
            <person name="Zhong S."/>
            <person name="Goodwin S.B."/>
            <person name="Grigoriev I.V."/>
        </authorList>
    </citation>
    <scope>NUCLEOTIDE SEQUENCE [LARGE SCALE GENOMIC DNA]</scope>
    <source>
        <strain>ND90Pr / ATCC 201652</strain>
    </source>
</reference>
<reference key="2">
    <citation type="journal article" date="2013" name="PLoS Genet.">
        <title>Comparative genome structure, secondary metabolite, and effector coding capacity across Cochliobolus pathogens.</title>
        <authorList>
            <person name="Condon B.J."/>
            <person name="Leng Y."/>
            <person name="Wu D."/>
            <person name="Bushley K.E."/>
            <person name="Ohm R.A."/>
            <person name="Otillar R."/>
            <person name="Martin J."/>
            <person name="Schackwitz W."/>
            <person name="Grimwood J."/>
            <person name="MohdZainudin N."/>
            <person name="Xue C."/>
            <person name="Wang R."/>
            <person name="Manning V.A."/>
            <person name="Dhillon B."/>
            <person name="Tu Z.J."/>
            <person name="Steffenson B.J."/>
            <person name="Salamov A."/>
            <person name="Sun H."/>
            <person name="Lowry S."/>
            <person name="LaButti K."/>
            <person name="Han J."/>
            <person name="Copeland A."/>
            <person name="Lindquist E."/>
            <person name="Barry K."/>
            <person name="Schmutz J."/>
            <person name="Baker S.E."/>
            <person name="Ciuffetti L.M."/>
            <person name="Grigoriev I.V."/>
            <person name="Zhong S."/>
            <person name="Turgeon B.G."/>
        </authorList>
    </citation>
    <scope>NUCLEOTIDE SEQUENCE [LARGE SCALE GENOMIC DNA]</scope>
    <source>
        <strain>ND90Pr / ATCC 201652</strain>
    </source>
</reference>
<reference key="3">
    <citation type="journal article" date="2024" name="J. Nat. Prod.">
        <title>Divergent Biosynthesis of Bridged Polycyclic Sesquiterpenoids by a Minimal Fungal Biosynthetic Gene Cluster.</title>
        <authorList>
            <person name="Zhang M.M."/>
            <person name="Long Y."/>
            <person name="Li Y."/>
            <person name="Cui J.J."/>
            <person name="Lv T."/>
            <person name="Luo S."/>
            <person name="Gao K."/>
            <person name="Dong S.H."/>
        </authorList>
    </citation>
    <scope>FUNCTION</scope>
    <scope>CATALYTIC ACTIVITY</scope>
    <scope>PATHWAY</scope>
</reference>
<proteinExistence type="evidence at protein level"/>
<organism>
    <name type="scientific">Cochliobolus sativus (strain ND90Pr / ATCC 201652)</name>
    <name type="common">Common root rot and spot blotch fungus</name>
    <name type="synonym">Bipolaris sorokiniana</name>
    <dbReference type="NCBI Taxonomy" id="665912"/>
    <lineage>
        <taxon>Eukaryota</taxon>
        <taxon>Fungi</taxon>
        <taxon>Dikarya</taxon>
        <taxon>Ascomycota</taxon>
        <taxon>Pezizomycotina</taxon>
        <taxon>Dothideomycetes</taxon>
        <taxon>Pleosporomycetidae</taxon>
        <taxon>Pleosporales</taxon>
        <taxon>Pleosporineae</taxon>
        <taxon>Pleosporaceae</taxon>
        <taxon>Bipolaris</taxon>
    </lineage>
</organism>
<evidence type="ECO:0000250" key="1">
    <source>
        <dbReference type="UniProtKB" id="P04798"/>
    </source>
</evidence>
<evidence type="ECO:0000255" key="2"/>
<evidence type="ECO:0000269" key="3">
    <source>
    </source>
</evidence>
<evidence type="ECO:0000303" key="4">
    <source>
    </source>
</evidence>
<evidence type="ECO:0000305" key="5"/>
<feature type="chain" id="PRO_0000461292" description="Cytochrome P450 monooxygenase BipB">
    <location>
        <begin position="1"/>
        <end position="508"/>
    </location>
</feature>
<feature type="transmembrane region" description="Helical" evidence="2">
    <location>
        <begin position="11"/>
        <end position="31"/>
    </location>
</feature>
<feature type="binding site" description="axial binding residue" evidence="1">
    <location>
        <position position="448"/>
    </location>
    <ligand>
        <name>heme</name>
        <dbReference type="ChEBI" id="CHEBI:30413"/>
    </ligand>
    <ligandPart>
        <name>Fe</name>
        <dbReference type="ChEBI" id="CHEBI:18248"/>
    </ligandPart>
</feature>
<gene>
    <name evidence="4" type="primary">BipB</name>
    <name type="ORF">COCSADRAFT_21313</name>
</gene>
<comment type="function">
    <text evidence="3">Cytochrome P450 monooxygenase; part of the minimal biosynthetic bip cluster that mediates the biosynthesis of bridged polycyclic sesquiterpenoids derived from sativene, isosativene, and longifolene (PubMed:38417166). The sesquiterpene cyclase BipA acts as a versatile cyclase that converts farnesyl diphosphate (FPP) into (-)-sativene as the dominant product and (-)-isosativene and (-)-longifolene as minor ones (PubMed:38417166). The cytochrome P450 monooxygenase BipB then hydroxylates different enantiomeric sesquiterpenes, such as (-)-longifolene and (+)-longifolene, at C-15 and C-14 (PubMed:38417166). The C-15- or both C-15- and C-14-hydroxylated products are further oxidized by unclustered oxidases, resulting in a structurally diverse array of sesquiterpenoids (PubMed:38417166). The BipB-catalyzed hydroxylation at C-15 serves as an initiator for the oxidation by the unclustered oxidases (PubMed:38417166).</text>
</comment>
<comment type="cofactor">
    <cofactor evidence="1">
        <name>heme</name>
        <dbReference type="ChEBI" id="CHEBI:30413"/>
    </cofactor>
</comment>
<comment type="pathway">
    <text evidence="3">Sesquiterpene biosynthesis.</text>
</comment>
<comment type="subcellular location">
    <subcellularLocation>
        <location evidence="2">Membrane</location>
        <topology evidence="2">Single-pass membrane protein</topology>
    </subcellularLocation>
</comment>
<comment type="similarity">
    <text evidence="5">Belongs to the cytochrome P450 family.</text>
</comment>
<dbReference type="EC" id="1.-.-.-" evidence="3"/>
<dbReference type="EMBL" id="KB445637">
    <property type="protein sequence ID" value="EMD69037.1"/>
    <property type="molecule type" value="Genomic_DNA"/>
</dbReference>
<dbReference type="RefSeq" id="XP_007694051.1">
    <property type="nucleotide sequence ID" value="XM_007695861.1"/>
</dbReference>
<dbReference type="SMR" id="M2TK17"/>
<dbReference type="STRING" id="665912.M2TK17"/>
<dbReference type="GeneID" id="19134445"/>
<dbReference type="KEGG" id="bsc:COCSADRAFT_21313"/>
<dbReference type="eggNOG" id="KOG0158">
    <property type="taxonomic scope" value="Eukaryota"/>
</dbReference>
<dbReference type="HOGENOM" id="CLU_001570_14_11_1"/>
<dbReference type="OMA" id="NEMEPMI"/>
<dbReference type="OrthoDB" id="1470350at2759"/>
<dbReference type="Proteomes" id="UP000016934">
    <property type="component" value="Unassembled WGS sequence"/>
</dbReference>
<dbReference type="GO" id="GO:0016020">
    <property type="term" value="C:membrane"/>
    <property type="evidence" value="ECO:0007669"/>
    <property type="project" value="UniProtKB-SubCell"/>
</dbReference>
<dbReference type="GO" id="GO:0020037">
    <property type="term" value="F:heme binding"/>
    <property type="evidence" value="ECO:0007669"/>
    <property type="project" value="InterPro"/>
</dbReference>
<dbReference type="GO" id="GO:0005506">
    <property type="term" value="F:iron ion binding"/>
    <property type="evidence" value="ECO:0007669"/>
    <property type="project" value="InterPro"/>
</dbReference>
<dbReference type="GO" id="GO:0004497">
    <property type="term" value="F:monooxygenase activity"/>
    <property type="evidence" value="ECO:0007669"/>
    <property type="project" value="UniProtKB-KW"/>
</dbReference>
<dbReference type="GO" id="GO:0016705">
    <property type="term" value="F:oxidoreductase activity, acting on paired donors, with incorporation or reduction of molecular oxygen"/>
    <property type="evidence" value="ECO:0007669"/>
    <property type="project" value="InterPro"/>
</dbReference>
<dbReference type="CDD" id="cd11058">
    <property type="entry name" value="CYP60B-like"/>
    <property type="match status" value="1"/>
</dbReference>
<dbReference type="Gene3D" id="1.10.630.10">
    <property type="entry name" value="Cytochrome P450"/>
    <property type="match status" value="1"/>
</dbReference>
<dbReference type="InterPro" id="IPR001128">
    <property type="entry name" value="Cyt_P450"/>
</dbReference>
<dbReference type="InterPro" id="IPR017972">
    <property type="entry name" value="Cyt_P450_CS"/>
</dbReference>
<dbReference type="InterPro" id="IPR002401">
    <property type="entry name" value="Cyt_P450_E_grp-I"/>
</dbReference>
<dbReference type="InterPro" id="IPR036396">
    <property type="entry name" value="Cyt_P450_sf"/>
</dbReference>
<dbReference type="InterPro" id="IPR050121">
    <property type="entry name" value="Cytochrome_P450_monoxygenase"/>
</dbReference>
<dbReference type="PANTHER" id="PTHR24305">
    <property type="entry name" value="CYTOCHROME P450"/>
    <property type="match status" value="1"/>
</dbReference>
<dbReference type="PANTHER" id="PTHR24305:SF161">
    <property type="entry name" value="P450, PUTATIVE (EUROFUNG)-RELATED"/>
    <property type="match status" value="1"/>
</dbReference>
<dbReference type="Pfam" id="PF00067">
    <property type="entry name" value="p450"/>
    <property type="match status" value="1"/>
</dbReference>
<dbReference type="PRINTS" id="PR00463">
    <property type="entry name" value="EP450I"/>
</dbReference>
<dbReference type="PRINTS" id="PR00385">
    <property type="entry name" value="P450"/>
</dbReference>
<dbReference type="SUPFAM" id="SSF48264">
    <property type="entry name" value="Cytochrome P450"/>
    <property type="match status" value="1"/>
</dbReference>
<dbReference type="PROSITE" id="PS00086">
    <property type="entry name" value="CYTOCHROME_P450"/>
    <property type="match status" value="1"/>
</dbReference>
<accession>M2TK17</accession>
<keyword id="KW-0349">Heme</keyword>
<keyword id="KW-0408">Iron</keyword>
<keyword id="KW-0472">Membrane</keyword>
<keyword id="KW-0479">Metal-binding</keyword>
<keyword id="KW-0503">Monooxygenase</keyword>
<keyword id="KW-0560">Oxidoreductase</keyword>
<keyword id="KW-1185">Reference proteome</keyword>
<keyword id="KW-0812">Transmembrane</keyword>
<keyword id="KW-1133">Transmembrane helix</keyword>
<protein>
    <recommendedName>
        <fullName evidence="4">Cytochrome P450 monooxygenase BipB</fullName>
        <ecNumber evidence="3">1.-.-.-</ecNumber>
    </recommendedName>
    <alternativeName>
        <fullName evidence="4">Minimal biosynthetic bip cluster protein B</fullName>
    </alternativeName>
</protein>